<proteinExistence type="inferred from homology"/>
<dbReference type="EC" id="4.1.1.65" evidence="1"/>
<dbReference type="EMBL" id="CP001488">
    <property type="protein sequence ID" value="ACO00258.1"/>
    <property type="molecule type" value="Genomic_DNA"/>
</dbReference>
<dbReference type="KEGG" id="bmi:BMEA_A0476"/>
<dbReference type="HOGENOM" id="CLU_072492_0_0_5"/>
<dbReference type="UniPathway" id="UPA00558">
    <property type="reaction ID" value="UER00616"/>
</dbReference>
<dbReference type="Proteomes" id="UP000001748">
    <property type="component" value="Chromosome I"/>
</dbReference>
<dbReference type="GO" id="GO:0005886">
    <property type="term" value="C:plasma membrane"/>
    <property type="evidence" value="ECO:0007669"/>
    <property type="project" value="UniProtKB-SubCell"/>
</dbReference>
<dbReference type="GO" id="GO:0004609">
    <property type="term" value="F:phosphatidylserine decarboxylase activity"/>
    <property type="evidence" value="ECO:0007669"/>
    <property type="project" value="UniProtKB-UniRule"/>
</dbReference>
<dbReference type="GO" id="GO:0006646">
    <property type="term" value="P:phosphatidylethanolamine biosynthetic process"/>
    <property type="evidence" value="ECO:0007669"/>
    <property type="project" value="UniProtKB-UniRule"/>
</dbReference>
<dbReference type="HAMAP" id="MF_00664">
    <property type="entry name" value="PS_decarb_PSD_A"/>
    <property type="match status" value="1"/>
</dbReference>
<dbReference type="InterPro" id="IPR003817">
    <property type="entry name" value="PS_Dcarbxylase"/>
</dbReference>
<dbReference type="InterPro" id="IPR033175">
    <property type="entry name" value="PSD-A"/>
</dbReference>
<dbReference type="NCBIfam" id="NF003677">
    <property type="entry name" value="PRK05305.1-1"/>
    <property type="match status" value="1"/>
</dbReference>
<dbReference type="NCBIfam" id="NF003678">
    <property type="entry name" value="PRK05305.1-2"/>
    <property type="match status" value="1"/>
</dbReference>
<dbReference type="NCBIfam" id="NF003679">
    <property type="entry name" value="PRK05305.1-3"/>
    <property type="match status" value="1"/>
</dbReference>
<dbReference type="NCBIfam" id="NF003685">
    <property type="entry name" value="PRK05305.2-5"/>
    <property type="match status" value="1"/>
</dbReference>
<dbReference type="PANTHER" id="PTHR35809">
    <property type="entry name" value="ARCHAETIDYLSERINE DECARBOXYLASE PROENZYME-RELATED"/>
    <property type="match status" value="1"/>
</dbReference>
<dbReference type="PANTHER" id="PTHR35809:SF1">
    <property type="entry name" value="ARCHAETIDYLSERINE DECARBOXYLASE PROENZYME-RELATED"/>
    <property type="match status" value="1"/>
</dbReference>
<dbReference type="Pfam" id="PF02666">
    <property type="entry name" value="PS_Dcarbxylase"/>
    <property type="match status" value="1"/>
</dbReference>
<protein>
    <recommendedName>
        <fullName evidence="1">Phosphatidylserine decarboxylase proenzyme</fullName>
        <ecNumber evidence="1">4.1.1.65</ecNumber>
    </recommendedName>
    <component>
        <recommendedName>
            <fullName evidence="1">Phosphatidylserine decarboxylase alpha chain</fullName>
        </recommendedName>
    </component>
    <component>
        <recommendedName>
            <fullName evidence="1">Phosphatidylserine decarboxylase beta chain</fullName>
        </recommendedName>
    </component>
</protein>
<comment type="function">
    <text evidence="1">Catalyzes the formation of phosphatidylethanolamine (PtdEtn) from phosphatidylserine (PtdSer).</text>
</comment>
<comment type="catalytic activity">
    <reaction evidence="1">
        <text>a 1,2-diacyl-sn-glycero-3-phospho-L-serine + H(+) = a 1,2-diacyl-sn-glycero-3-phosphoethanolamine + CO2</text>
        <dbReference type="Rhea" id="RHEA:20828"/>
        <dbReference type="ChEBI" id="CHEBI:15378"/>
        <dbReference type="ChEBI" id="CHEBI:16526"/>
        <dbReference type="ChEBI" id="CHEBI:57262"/>
        <dbReference type="ChEBI" id="CHEBI:64612"/>
        <dbReference type="EC" id="4.1.1.65"/>
    </reaction>
</comment>
<comment type="cofactor">
    <cofactor evidence="1">
        <name>pyruvate</name>
        <dbReference type="ChEBI" id="CHEBI:15361"/>
    </cofactor>
    <text evidence="1">Binds 1 pyruvoyl group covalently per subunit.</text>
</comment>
<comment type="pathway">
    <text evidence="1">Phospholipid metabolism; phosphatidylethanolamine biosynthesis; phosphatidylethanolamine from CDP-diacylglycerol: step 2/2.</text>
</comment>
<comment type="subunit">
    <text evidence="1">Heterodimer of a large membrane-associated beta subunit and a small pyruvoyl-containing alpha subunit.</text>
</comment>
<comment type="subcellular location">
    <subcellularLocation>
        <location evidence="1">Cell membrane</location>
        <topology evidence="1">Peripheral membrane protein</topology>
    </subcellularLocation>
</comment>
<comment type="PTM">
    <text evidence="1">Is synthesized initially as an inactive proenzyme. Formation of the active enzyme involves a self-maturation process in which the active site pyruvoyl group is generated from an internal serine residue via an autocatalytic post-translational modification. Two non-identical subunits are generated from the proenzyme in this reaction, and the pyruvate is formed at the N-terminus of the alpha chain, which is derived from the carboxyl end of the proenzyme. The post-translation cleavage follows an unusual pathway, termed non-hydrolytic serinolysis, in which the side chain hydroxyl group of the serine supplies its oxygen atom to form the C-terminus of the beta chain, while the remainder of the serine residue undergoes an oxidative deamination to produce ammonia and the pyruvoyl prosthetic group on the alpha chain.</text>
</comment>
<comment type="similarity">
    <text evidence="1">Belongs to the phosphatidylserine decarboxylase family. PSD-A subfamily.</text>
</comment>
<name>PSD_BRUMB</name>
<feature type="chain" id="PRO_1000192892" description="Phosphatidylserine decarboxylase beta chain" evidence="1">
    <location>
        <begin position="1"/>
        <end position="189"/>
    </location>
</feature>
<feature type="chain" id="PRO_1000192893" description="Phosphatidylserine decarboxylase alpha chain" evidence="1">
    <location>
        <begin position="190"/>
        <end position="232"/>
    </location>
</feature>
<feature type="active site" description="Schiff-base intermediate with substrate; via pyruvic acid" evidence="1">
    <location>
        <position position="190"/>
    </location>
</feature>
<feature type="site" description="Cleavage (non-hydrolytic); by autocatalysis" evidence="1">
    <location>
        <begin position="189"/>
        <end position="190"/>
    </location>
</feature>
<feature type="modified residue" description="Pyruvic acid (Ser); by autocatalysis" evidence="1">
    <location>
        <position position="190"/>
    </location>
</feature>
<reference key="1">
    <citation type="submission" date="2009-03" db="EMBL/GenBank/DDBJ databases">
        <title>Brucella melitensis ATCC 23457 whole genome shotgun sequencing project.</title>
        <authorList>
            <person name="Setubal J.C."/>
            <person name="Boyle S."/>
            <person name="Crasta O.R."/>
            <person name="Gillespie J.J."/>
            <person name="Kenyon R.W."/>
            <person name="Lu J."/>
            <person name="Mane S."/>
            <person name="Nagrani S."/>
            <person name="Shallom J.M."/>
            <person name="Shallom S."/>
            <person name="Shukla M."/>
            <person name="Snyder E.E."/>
            <person name="Sobral B.W."/>
            <person name="Wattam A.R."/>
            <person name="Will R."/>
            <person name="Williams K."/>
            <person name="Yoo H."/>
            <person name="Munk C."/>
            <person name="Tapia R."/>
            <person name="Han C."/>
            <person name="Detter J.C."/>
            <person name="Bruce D."/>
            <person name="Brettin T.S."/>
        </authorList>
    </citation>
    <scope>NUCLEOTIDE SEQUENCE [LARGE SCALE GENOMIC DNA]</scope>
    <source>
        <strain>ATCC 23457</strain>
    </source>
</reference>
<accession>C0RHF0</accession>
<sequence>MSLTDTIRNTFVPIHREGYPFIAGFFVVSLILGWLWDPLFWIGMVLTVWCIYFYRDPERVTPMDDDLVISPADGKVSFVGLAVPPAELDLGYEPMTRVSVFMNVFSVHINRSPVRGKIDKVVHRPGKFLNAELDKASTENERNSVLIESPHGKIGVVQIAGLVARRIVCWSNQDDELSVGERFGLIRFGSRVDVYLPSDATVRVAVGQTAIAGETVLADYGTERGEPVVRIA</sequence>
<organism>
    <name type="scientific">Brucella melitensis biotype 2 (strain ATCC 23457)</name>
    <dbReference type="NCBI Taxonomy" id="546272"/>
    <lineage>
        <taxon>Bacteria</taxon>
        <taxon>Pseudomonadati</taxon>
        <taxon>Pseudomonadota</taxon>
        <taxon>Alphaproteobacteria</taxon>
        <taxon>Hyphomicrobiales</taxon>
        <taxon>Brucellaceae</taxon>
        <taxon>Brucella/Ochrobactrum group</taxon>
        <taxon>Brucella</taxon>
    </lineage>
</organism>
<gene>
    <name evidence="1" type="primary">psd</name>
    <name type="ordered locus">BMEA_A0476</name>
</gene>
<evidence type="ECO:0000255" key="1">
    <source>
        <dbReference type="HAMAP-Rule" id="MF_00664"/>
    </source>
</evidence>
<keyword id="KW-1003">Cell membrane</keyword>
<keyword id="KW-0210">Decarboxylase</keyword>
<keyword id="KW-0444">Lipid biosynthesis</keyword>
<keyword id="KW-0443">Lipid metabolism</keyword>
<keyword id="KW-0456">Lyase</keyword>
<keyword id="KW-0472">Membrane</keyword>
<keyword id="KW-0594">Phospholipid biosynthesis</keyword>
<keyword id="KW-1208">Phospholipid metabolism</keyword>
<keyword id="KW-0670">Pyruvate</keyword>
<keyword id="KW-0865">Zymogen</keyword>